<reference key="1">
    <citation type="journal article" date="2007" name="PLoS Genet.">
        <title>Genome analysis of Minibacterium massiliensis highlights the convergent evolution of water-living bacteria.</title>
        <authorList>
            <person name="Audic S."/>
            <person name="Robert C."/>
            <person name="Campagna B."/>
            <person name="Parinello H."/>
            <person name="Claverie J.-M."/>
            <person name="Raoult D."/>
            <person name="Drancourt M."/>
        </authorList>
    </citation>
    <scope>NUCLEOTIDE SEQUENCE [LARGE SCALE GENOMIC DNA]</scope>
    <source>
        <strain>Marseille</strain>
    </source>
</reference>
<comment type="function">
    <text evidence="1">Reversibly transfers an adenylyl group from ATP to 4'-phosphopantetheine, yielding dephospho-CoA (dPCoA) and pyrophosphate.</text>
</comment>
<comment type="catalytic activity">
    <reaction evidence="1">
        <text>(R)-4'-phosphopantetheine + ATP + H(+) = 3'-dephospho-CoA + diphosphate</text>
        <dbReference type="Rhea" id="RHEA:19801"/>
        <dbReference type="ChEBI" id="CHEBI:15378"/>
        <dbReference type="ChEBI" id="CHEBI:30616"/>
        <dbReference type="ChEBI" id="CHEBI:33019"/>
        <dbReference type="ChEBI" id="CHEBI:57328"/>
        <dbReference type="ChEBI" id="CHEBI:61723"/>
        <dbReference type="EC" id="2.7.7.3"/>
    </reaction>
</comment>
<comment type="cofactor">
    <cofactor evidence="1">
        <name>Mg(2+)</name>
        <dbReference type="ChEBI" id="CHEBI:18420"/>
    </cofactor>
</comment>
<comment type="pathway">
    <text evidence="1">Cofactor biosynthesis; coenzyme A biosynthesis; CoA from (R)-pantothenate: step 4/5.</text>
</comment>
<comment type="subunit">
    <text evidence="1">Homohexamer.</text>
</comment>
<comment type="subcellular location">
    <subcellularLocation>
        <location evidence="1">Cytoplasm</location>
    </subcellularLocation>
</comment>
<comment type="similarity">
    <text evidence="1">Belongs to the bacterial CoaD family.</text>
</comment>
<name>COAD_JANMA</name>
<dbReference type="EC" id="2.7.7.3" evidence="1"/>
<dbReference type="EMBL" id="CP000269">
    <property type="protein sequence ID" value="ABR89052.1"/>
    <property type="molecule type" value="Genomic_DNA"/>
</dbReference>
<dbReference type="RefSeq" id="WP_012080978.1">
    <property type="nucleotide sequence ID" value="NC_009659.1"/>
</dbReference>
<dbReference type="SMR" id="A6T2S8"/>
<dbReference type="STRING" id="375286.mma_3135"/>
<dbReference type="KEGG" id="mms:mma_3135"/>
<dbReference type="eggNOG" id="COG0669">
    <property type="taxonomic scope" value="Bacteria"/>
</dbReference>
<dbReference type="HOGENOM" id="CLU_100149_0_1_4"/>
<dbReference type="OrthoDB" id="9806661at2"/>
<dbReference type="UniPathway" id="UPA00241">
    <property type="reaction ID" value="UER00355"/>
</dbReference>
<dbReference type="Proteomes" id="UP000006388">
    <property type="component" value="Chromosome"/>
</dbReference>
<dbReference type="GO" id="GO:0005737">
    <property type="term" value="C:cytoplasm"/>
    <property type="evidence" value="ECO:0007669"/>
    <property type="project" value="UniProtKB-SubCell"/>
</dbReference>
<dbReference type="GO" id="GO:0005524">
    <property type="term" value="F:ATP binding"/>
    <property type="evidence" value="ECO:0007669"/>
    <property type="project" value="UniProtKB-KW"/>
</dbReference>
<dbReference type="GO" id="GO:0004595">
    <property type="term" value="F:pantetheine-phosphate adenylyltransferase activity"/>
    <property type="evidence" value="ECO:0007669"/>
    <property type="project" value="UniProtKB-UniRule"/>
</dbReference>
<dbReference type="GO" id="GO:0015937">
    <property type="term" value="P:coenzyme A biosynthetic process"/>
    <property type="evidence" value="ECO:0007669"/>
    <property type="project" value="UniProtKB-UniRule"/>
</dbReference>
<dbReference type="CDD" id="cd02163">
    <property type="entry name" value="PPAT"/>
    <property type="match status" value="1"/>
</dbReference>
<dbReference type="Gene3D" id="3.40.50.620">
    <property type="entry name" value="HUPs"/>
    <property type="match status" value="1"/>
</dbReference>
<dbReference type="HAMAP" id="MF_00151">
    <property type="entry name" value="PPAT_bact"/>
    <property type="match status" value="1"/>
</dbReference>
<dbReference type="InterPro" id="IPR004821">
    <property type="entry name" value="Cyt_trans-like"/>
</dbReference>
<dbReference type="InterPro" id="IPR001980">
    <property type="entry name" value="PPAT"/>
</dbReference>
<dbReference type="InterPro" id="IPR014729">
    <property type="entry name" value="Rossmann-like_a/b/a_fold"/>
</dbReference>
<dbReference type="NCBIfam" id="TIGR01510">
    <property type="entry name" value="coaD_prev_kdtB"/>
    <property type="match status" value="1"/>
</dbReference>
<dbReference type="NCBIfam" id="TIGR00125">
    <property type="entry name" value="cyt_tran_rel"/>
    <property type="match status" value="1"/>
</dbReference>
<dbReference type="PANTHER" id="PTHR21342">
    <property type="entry name" value="PHOSPHOPANTETHEINE ADENYLYLTRANSFERASE"/>
    <property type="match status" value="1"/>
</dbReference>
<dbReference type="PANTHER" id="PTHR21342:SF1">
    <property type="entry name" value="PHOSPHOPANTETHEINE ADENYLYLTRANSFERASE"/>
    <property type="match status" value="1"/>
</dbReference>
<dbReference type="Pfam" id="PF01467">
    <property type="entry name" value="CTP_transf_like"/>
    <property type="match status" value="1"/>
</dbReference>
<dbReference type="PRINTS" id="PR01020">
    <property type="entry name" value="LPSBIOSNTHSS"/>
</dbReference>
<dbReference type="SUPFAM" id="SSF52374">
    <property type="entry name" value="Nucleotidylyl transferase"/>
    <property type="match status" value="1"/>
</dbReference>
<keyword id="KW-0067">ATP-binding</keyword>
<keyword id="KW-0173">Coenzyme A biosynthesis</keyword>
<keyword id="KW-0963">Cytoplasm</keyword>
<keyword id="KW-0460">Magnesium</keyword>
<keyword id="KW-0547">Nucleotide-binding</keyword>
<keyword id="KW-0548">Nucleotidyltransferase</keyword>
<keyword id="KW-0808">Transferase</keyword>
<sequence>MVTAIYPGTFDPLTRGHEDLVRRASGLFDKLIVGVADSRNKKPFFSLEERLTISNEVLGHYPNVHVESFSGLLKDFVRRHDARVIVRGLRAVSDFEYEFQMAGMNRYLLPDVETLFLTPSDQYQFISGTIVREIATLGGDVSKFVFPSVDKWLKEKIAAQG</sequence>
<accession>A6T2S8</accession>
<protein>
    <recommendedName>
        <fullName evidence="1">Phosphopantetheine adenylyltransferase</fullName>
        <ecNumber evidence="1">2.7.7.3</ecNumber>
    </recommendedName>
    <alternativeName>
        <fullName evidence="1">Dephospho-CoA pyrophosphorylase</fullName>
    </alternativeName>
    <alternativeName>
        <fullName evidence="1">Pantetheine-phosphate adenylyltransferase</fullName>
        <shortName evidence="1">PPAT</shortName>
    </alternativeName>
</protein>
<organism>
    <name type="scientific">Janthinobacterium sp. (strain Marseille)</name>
    <name type="common">Minibacterium massiliensis</name>
    <dbReference type="NCBI Taxonomy" id="375286"/>
    <lineage>
        <taxon>Bacteria</taxon>
        <taxon>Pseudomonadati</taxon>
        <taxon>Pseudomonadota</taxon>
        <taxon>Betaproteobacteria</taxon>
        <taxon>Burkholderiales</taxon>
        <taxon>Oxalobacteraceae</taxon>
        <taxon>Janthinobacterium</taxon>
    </lineage>
</organism>
<proteinExistence type="inferred from homology"/>
<feature type="chain" id="PRO_1000011160" description="Phosphopantetheine adenylyltransferase">
    <location>
        <begin position="1"/>
        <end position="161"/>
    </location>
</feature>
<feature type="binding site" evidence="1">
    <location>
        <begin position="9"/>
        <end position="10"/>
    </location>
    <ligand>
        <name>ATP</name>
        <dbReference type="ChEBI" id="CHEBI:30616"/>
    </ligand>
</feature>
<feature type="binding site" evidence="1">
    <location>
        <position position="9"/>
    </location>
    <ligand>
        <name>substrate</name>
    </ligand>
</feature>
<feature type="binding site" evidence="1">
    <location>
        <position position="17"/>
    </location>
    <ligand>
        <name>ATP</name>
        <dbReference type="ChEBI" id="CHEBI:30616"/>
    </ligand>
</feature>
<feature type="binding site" evidence="1">
    <location>
        <position position="41"/>
    </location>
    <ligand>
        <name>substrate</name>
    </ligand>
</feature>
<feature type="binding site" evidence="1">
    <location>
        <position position="73"/>
    </location>
    <ligand>
        <name>substrate</name>
    </ligand>
</feature>
<feature type="binding site" evidence="1">
    <location>
        <position position="87"/>
    </location>
    <ligand>
        <name>substrate</name>
    </ligand>
</feature>
<feature type="binding site" evidence="1">
    <location>
        <begin position="88"/>
        <end position="90"/>
    </location>
    <ligand>
        <name>ATP</name>
        <dbReference type="ChEBI" id="CHEBI:30616"/>
    </ligand>
</feature>
<feature type="binding site" evidence="1">
    <location>
        <position position="98"/>
    </location>
    <ligand>
        <name>ATP</name>
        <dbReference type="ChEBI" id="CHEBI:30616"/>
    </ligand>
</feature>
<feature type="binding site" evidence="1">
    <location>
        <begin position="123"/>
        <end position="129"/>
    </location>
    <ligand>
        <name>ATP</name>
        <dbReference type="ChEBI" id="CHEBI:30616"/>
    </ligand>
</feature>
<feature type="site" description="Transition state stabilizer" evidence="1">
    <location>
        <position position="17"/>
    </location>
</feature>
<gene>
    <name evidence="1" type="primary">coaD</name>
    <name type="ordered locus">mma_3135</name>
</gene>
<evidence type="ECO:0000255" key="1">
    <source>
        <dbReference type="HAMAP-Rule" id="MF_00151"/>
    </source>
</evidence>